<proteinExistence type="inferred from homology"/>
<feature type="chain" id="PRO_0000193617" description="Mitochondrial import inner membrane translocase subunit TIM10">
    <location>
        <begin position="1"/>
        <end position="91"/>
    </location>
</feature>
<feature type="short sequence motif" description="Twin CX3C motif">
    <location>
        <begin position="38"/>
        <end position="63"/>
    </location>
</feature>
<feature type="disulfide bond" evidence="1">
    <location>
        <begin position="38"/>
        <end position="63"/>
    </location>
</feature>
<feature type="disulfide bond" evidence="1">
    <location>
        <begin position="42"/>
        <end position="59"/>
    </location>
</feature>
<evidence type="ECO:0000250" key="1"/>
<evidence type="ECO:0000305" key="2"/>
<reference key="1">
    <citation type="journal article" date="2004" name="Nature">
        <title>Genome evolution in yeasts.</title>
        <authorList>
            <person name="Dujon B."/>
            <person name="Sherman D."/>
            <person name="Fischer G."/>
            <person name="Durrens P."/>
            <person name="Casaregola S."/>
            <person name="Lafontaine I."/>
            <person name="de Montigny J."/>
            <person name="Marck C."/>
            <person name="Neuveglise C."/>
            <person name="Talla E."/>
            <person name="Goffard N."/>
            <person name="Frangeul L."/>
            <person name="Aigle M."/>
            <person name="Anthouard V."/>
            <person name="Babour A."/>
            <person name="Barbe V."/>
            <person name="Barnay S."/>
            <person name="Blanchin S."/>
            <person name="Beckerich J.-M."/>
            <person name="Beyne E."/>
            <person name="Bleykasten C."/>
            <person name="Boisrame A."/>
            <person name="Boyer J."/>
            <person name="Cattolico L."/>
            <person name="Confanioleri F."/>
            <person name="de Daruvar A."/>
            <person name="Despons L."/>
            <person name="Fabre E."/>
            <person name="Fairhead C."/>
            <person name="Ferry-Dumazet H."/>
            <person name="Groppi A."/>
            <person name="Hantraye F."/>
            <person name="Hennequin C."/>
            <person name="Jauniaux N."/>
            <person name="Joyet P."/>
            <person name="Kachouri R."/>
            <person name="Kerrest A."/>
            <person name="Koszul R."/>
            <person name="Lemaire M."/>
            <person name="Lesur I."/>
            <person name="Ma L."/>
            <person name="Muller H."/>
            <person name="Nicaud J.-M."/>
            <person name="Nikolski M."/>
            <person name="Oztas S."/>
            <person name="Ozier-Kalogeropoulos O."/>
            <person name="Pellenz S."/>
            <person name="Potier S."/>
            <person name="Richard G.-F."/>
            <person name="Straub M.-L."/>
            <person name="Suleau A."/>
            <person name="Swennen D."/>
            <person name="Tekaia F."/>
            <person name="Wesolowski-Louvel M."/>
            <person name="Westhof E."/>
            <person name="Wirth B."/>
            <person name="Zeniou-Meyer M."/>
            <person name="Zivanovic Y."/>
            <person name="Bolotin-Fukuhara M."/>
            <person name="Thierry A."/>
            <person name="Bouchier C."/>
            <person name="Caudron B."/>
            <person name="Scarpelli C."/>
            <person name="Gaillardin C."/>
            <person name="Weissenbach J."/>
            <person name="Wincker P."/>
            <person name="Souciet J.-L."/>
        </authorList>
    </citation>
    <scope>NUCLEOTIDE SEQUENCE [LARGE SCALE GENOMIC DNA]</scope>
    <source>
        <strain>ATCC 36239 / CBS 767 / BCRC 21394 / JCM 1990 / NBRC 0083 / IGC 2968</strain>
    </source>
</reference>
<organism>
    <name type="scientific">Debaryomyces hansenii (strain ATCC 36239 / CBS 767 / BCRC 21394 / JCM 1990 / NBRC 0083 / IGC 2968)</name>
    <name type="common">Yeast</name>
    <name type="synonym">Torulaspora hansenii</name>
    <dbReference type="NCBI Taxonomy" id="284592"/>
    <lineage>
        <taxon>Eukaryota</taxon>
        <taxon>Fungi</taxon>
        <taxon>Dikarya</taxon>
        <taxon>Ascomycota</taxon>
        <taxon>Saccharomycotina</taxon>
        <taxon>Pichiomycetes</taxon>
        <taxon>Debaryomycetaceae</taxon>
        <taxon>Debaryomyces</taxon>
    </lineage>
</organism>
<keyword id="KW-0143">Chaperone</keyword>
<keyword id="KW-1015">Disulfide bond</keyword>
<keyword id="KW-0472">Membrane</keyword>
<keyword id="KW-0479">Metal-binding</keyword>
<keyword id="KW-0496">Mitochondrion</keyword>
<keyword id="KW-0999">Mitochondrion inner membrane</keyword>
<keyword id="KW-0653">Protein transport</keyword>
<keyword id="KW-1185">Reference proteome</keyword>
<keyword id="KW-0811">Translocation</keyword>
<keyword id="KW-0813">Transport</keyword>
<keyword id="KW-0862">Zinc</keyword>
<accession>Q6BHJ3</accession>
<comment type="function">
    <text evidence="1">Mitochondrial intermembrane chaperone that participates in the import and insertion of multi-pass transmembrane proteins into the mitochondrial inner membrane. Also required for the transfer of beta-barrel precursors from the TOM complex to the sorting and assembly machinery (SAM complex) of the outer membrane. Acts as a chaperone-like protein that protects the hydrophobic precursors from aggregation and guide them through the mitochondrial intermembrane space (By similarity).</text>
</comment>
<comment type="subunit">
    <text evidence="1">Heterohexamer; composed of 3 copies of TIM9 and 3 copies of TIM10, named soluble 70 kDa complex. Associates directly with the TIM22 complex, whose core is composed of TIM22 and TIM54. Interacts with the transmembrane regions of multi-pass transmembrane proteins in transit (By similarity).</text>
</comment>
<comment type="subcellular location">
    <subcellularLocation>
        <location evidence="1">Mitochondrion inner membrane</location>
        <topology evidence="1">Peripheral membrane protein</topology>
        <orientation evidence="1">Intermembrane side</orientation>
    </subcellularLocation>
</comment>
<comment type="domain">
    <text evidence="1">The twin CX3C motif contains 4 conserved Cys residues that form 2 disulfide bonds in the mitochondrial intermembrane space. However, during the transit of TIM10 from cytoplasm into mitochondrion, the Cys residues probably coordinate zinc, thereby preventing folding and allowing its transfer across mitochondrial outer membrane (By similarity).</text>
</comment>
<comment type="similarity">
    <text evidence="2">Belongs to the small Tim family.</text>
</comment>
<sequence length="91" mass="10108">MFGLGGAAPQISSQQKLQAAEAELDMVTGMFNQLVEQCHSKCINKTYNDSEVSKQEALCLDRCVAKYFETNVQVGEHMQKMGQSGQFMGRQ</sequence>
<dbReference type="EMBL" id="CR382139">
    <property type="protein sequence ID" value="CAG90834.1"/>
    <property type="molecule type" value="Genomic_DNA"/>
</dbReference>
<dbReference type="RefSeq" id="XP_462328.1">
    <property type="nucleotide sequence ID" value="XM_462328.1"/>
</dbReference>
<dbReference type="SMR" id="Q6BHJ3"/>
<dbReference type="FunCoup" id="Q6BHJ3">
    <property type="interactions" value="713"/>
</dbReference>
<dbReference type="STRING" id="284592.Q6BHJ3"/>
<dbReference type="GeneID" id="2905266"/>
<dbReference type="KEGG" id="dha:DEHA2G18106g"/>
<dbReference type="VEuPathDB" id="FungiDB:DEHA2G18106g"/>
<dbReference type="eggNOG" id="KOG3480">
    <property type="taxonomic scope" value="Eukaryota"/>
</dbReference>
<dbReference type="HOGENOM" id="CLU_162151_1_0_1"/>
<dbReference type="InParanoid" id="Q6BHJ3"/>
<dbReference type="OMA" id="VGENMQK"/>
<dbReference type="OrthoDB" id="274922at2759"/>
<dbReference type="Proteomes" id="UP000000599">
    <property type="component" value="Chromosome G"/>
</dbReference>
<dbReference type="GO" id="GO:0042719">
    <property type="term" value="C:mitochondrial intermembrane space protein transporter complex"/>
    <property type="evidence" value="ECO:0007669"/>
    <property type="project" value="EnsemblFungi"/>
</dbReference>
<dbReference type="GO" id="GO:0042721">
    <property type="term" value="C:TIM22 mitochondrial import inner membrane insertion complex"/>
    <property type="evidence" value="ECO:0007669"/>
    <property type="project" value="EnsemblFungi"/>
</dbReference>
<dbReference type="GO" id="GO:0046872">
    <property type="term" value="F:metal ion binding"/>
    <property type="evidence" value="ECO:0007669"/>
    <property type="project" value="UniProtKB-KW"/>
</dbReference>
<dbReference type="GO" id="GO:0140318">
    <property type="term" value="F:protein transporter activity"/>
    <property type="evidence" value="ECO:0007669"/>
    <property type="project" value="EnsemblFungi"/>
</dbReference>
<dbReference type="GO" id="GO:0051082">
    <property type="term" value="F:unfolded protein binding"/>
    <property type="evidence" value="ECO:0007669"/>
    <property type="project" value="EnsemblFungi"/>
</dbReference>
<dbReference type="GO" id="GO:0045039">
    <property type="term" value="P:protein insertion into mitochondrial inner membrane"/>
    <property type="evidence" value="ECO:0007669"/>
    <property type="project" value="EnsemblFungi"/>
</dbReference>
<dbReference type="FunFam" id="1.10.287.810:FF:000002">
    <property type="entry name" value="Mitochondrial import inner membrane translocase subunit tim10"/>
    <property type="match status" value="1"/>
</dbReference>
<dbReference type="Gene3D" id="1.10.287.810">
    <property type="entry name" value="Mitochondrial import inner membrane translocase subunit tim13 like domains"/>
    <property type="match status" value="1"/>
</dbReference>
<dbReference type="InterPro" id="IPR004217">
    <property type="entry name" value="Tim10-like"/>
</dbReference>
<dbReference type="InterPro" id="IPR035427">
    <property type="entry name" value="Tim10-like_dom_sf"/>
</dbReference>
<dbReference type="PANTHER" id="PTHR11038">
    <property type="entry name" value="MITOCHONDRIAL IMPORT INNER MEMBRANE TRANSLOCASE SUBUNIT TIM10"/>
    <property type="match status" value="1"/>
</dbReference>
<dbReference type="PANTHER" id="PTHR11038:SF16">
    <property type="entry name" value="MITOCHONDRIAL IMPORT INNER MEMBRANE TRANSLOCASE SUBUNIT TIM10"/>
    <property type="match status" value="1"/>
</dbReference>
<dbReference type="Pfam" id="PF02953">
    <property type="entry name" value="zf-Tim10_DDP"/>
    <property type="match status" value="1"/>
</dbReference>
<dbReference type="SUPFAM" id="SSF144122">
    <property type="entry name" value="Tim10-like"/>
    <property type="match status" value="1"/>
</dbReference>
<protein>
    <recommendedName>
        <fullName>Mitochondrial import inner membrane translocase subunit TIM10</fullName>
    </recommendedName>
</protein>
<name>TIM10_DEBHA</name>
<gene>
    <name type="primary">TIM10</name>
    <name type="ordered locus">DEHA2G18106g</name>
</gene>